<feature type="chain" id="PRO_1000085153" description="Chaperone protein DnaJ">
    <location>
        <begin position="1"/>
        <end position="388"/>
    </location>
</feature>
<feature type="domain" description="J" evidence="1">
    <location>
        <begin position="5"/>
        <end position="70"/>
    </location>
</feature>
<feature type="repeat" description="CXXCXGXG motif">
    <location>
        <begin position="148"/>
        <end position="155"/>
    </location>
</feature>
<feature type="repeat" description="CXXCXGXG motif">
    <location>
        <begin position="165"/>
        <end position="172"/>
    </location>
</feature>
<feature type="repeat" description="CXXCXGXG motif">
    <location>
        <begin position="187"/>
        <end position="194"/>
    </location>
</feature>
<feature type="repeat" description="CXXCXGXG motif">
    <location>
        <begin position="201"/>
        <end position="208"/>
    </location>
</feature>
<feature type="zinc finger region" description="CR-type" evidence="1">
    <location>
        <begin position="135"/>
        <end position="213"/>
    </location>
</feature>
<feature type="binding site" evidence="1">
    <location>
        <position position="148"/>
    </location>
    <ligand>
        <name>Zn(2+)</name>
        <dbReference type="ChEBI" id="CHEBI:29105"/>
        <label>1</label>
    </ligand>
</feature>
<feature type="binding site" evidence="1">
    <location>
        <position position="151"/>
    </location>
    <ligand>
        <name>Zn(2+)</name>
        <dbReference type="ChEBI" id="CHEBI:29105"/>
        <label>1</label>
    </ligand>
</feature>
<feature type="binding site" evidence="1">
    <location>
        <position position="165"/>
    </location>
    <ligand>
        <name>Zn(2+)</name>
        <dbReference type="ChEBI" id="CHEBI:29105"/>
        <label>2</label>
    </ligand>
</feature>
<feature type="binding site" evidence="1">
    <location>
        <position position="168"/>
    </location>
    <ligand>
        <name>Zn(2+)</name>
        <dbReference type="ChEBI" id="CHEBI:29105"/>
        <label>2</label>
    </ligand>
</feature>
<feature type="binding site" evidence="1">
    <location>
        <position position="187"/>
    </location>
    <ligand>
        <name>Zn(2+)</name>
        <dbReference type="ChEBI" id="CHEBI:29105"/>
        <label>2</label>
    </ligand>
</feature>
<feature type="binding site" evidence="1">
    <location>
        <position position="190"/>
    </location>
    <ligand>
        <name>Zn(2+)</name>
        <dbReference type="ChEBI" id="CHEBI:29105"/>
        <label>2</label>
    </ligand>
</feature>
<feature type="binding site" evidence="1">
    <location>
        <position position="201"/>
    </location>
    <ligand>
        <name>Zn(2+)</name>
        <dbReference type="ChEBI" id="CHEBI:29105"/>
        <label>1</label>
    </ligand>
</feature>
<feature type="binding site" evidence="1">
    <location>
        <position position="204"/>
    </location>
    <ligand>
        <name>Zn(2+)</name>
        <dbReference type="ChEBI" id="CHEBI:29105"/>
        <label>1</label>
    </ligand>
</feature>
<evidence type="ECO:0000255" key="1">
    <source>
        <dbReference type="HAMAP-Rule" id="MF_01152"/>
    </source>
</evidence>
<sequence length="388" mass="43906">MTKQDYYTTLNISNTASQLDIKRAYKKLAIKYHPDRNQGNKTAEEKFKKIKQAYEILSDTKKRNLYDQYGHSAFEQNNNSNNEFHSSFTTSTSDFNDIFGDVFGDIFGSNKKNRKEKGSDLQYNIILTLEEAVKGIKKEIRIPKLDKCQSCYGYGSAYGSKPSTCTSCNGHGQIHMRKGFFSVQQTCSTCRGTGTMIKNPCKICFGQGRIKKSKKLSITIPAGIDTNDQIRLNNEGEAGKYGAKSGDLYIQIKVKKHPIFKRDENNLHCKIPINFVIAGGSIILYSSFRGEITVPTLEGKINLKIPSETQSGKIFRIRGKGVKSVRKGFQGDLFCKIIVETPVNLNSFQKKILYQLGESFKNYKGENNSPKSKRFFNSVKKFFNNFTK</sequence>
<protein>
    <recommendedName>
        <fullName evidence="1">Chaperone protein DnaJ</fullName>
    </recommendedName>
</protein>
<accession>Q057X7</accession>
<proteinExistence type="inferred from homology"/>
<keyword id="KW-0143">Chaperone</keyword>
<keyword id="KW-0963">Cytoplasm</keyword>
<keyword id="KW-0235">DNA replication</keyword>
<keyword id="KW-0479">Metal-binding</keyword>
<keyword id="KW-1185">Reference proteome</keyword>
<keyword id="KW-0677">Repeat</keyword>
<keyword id="KW-0346">Stress response</keyword>
<keyword id="KW-0862">Zinc</keyword>
<keyword id="KW-0863">Zinc-finger</keyword>
<name>DNAJ_BUCCC</name>
<comment type="function">
    <text evidence="1">Participates actively in the response to hyperosmotic and heat shock by preventing the aggregation of stress-denatured proteins and by disaggregating proteins, also in an autonomous, DnaK-independent fashion. Unfolded proteins bind initially to DnaJ; upon interaction with the DnaJ-bound protein, DnaK hydrolyzes its bound ATP, resulting in the formation of a stable complex. GrpE releases ADP from DnaK; ATP binding to DnaK triggers the release of the substrate protein, thus completing the reaction cycle. Several rounds of ATP-dependent interactions between DnaJ, DnaK and GrpE are required for fully efficient folding. Also involved, together with DnaK and GrpE, in the DNA replication of plasmids through activation of initiation proteins.</text>
</comment>
<comment type="cofactor">
    <cofactor evidence="1">
        <name>Zn(2+)</name>
        <dbReference type="ChEBI" id="CHEBI:29105"/>
    </cofactor>
    <text evidence="1">Binds 2 Zn(2+) ions per monomer.</text>
</comment>
<comment type="subunit">
    <text evidence="1">Homodimer.</text>
</comment>
<comment type="subcellular location">
    <subcellularLocation>
        <location evidence="1">Cytoplasm</location>
    </subcellularLocation>
</comment>
<comment type="domain">
    <text evidence="1">The J domain is necessary and sufficient to stimulate DnaK ATPase activity. Zinc center 1 plays an important role in the autonomous, DnaK-independent chaperone activity of DnaJ. Zinc center 2 is essential for interaction with DnaK and for DnaJ activity.</text>
</comment>
<comment type="similarity">
    <text evidence="1">Belongs to the DnaJ family.</text>
</comment>
<gene>
    <name evidence="1" type="primary">dnaJ</name>
    <name type="ordered locus">BCc_095</name>
</gene>
<dbReference type="EMBL" id="CP000263">
    <property type="protein sequence ID" value="ABJ90572.1"/>
    <property type="molecule type" value="Genomic_DNA"/>
</dbReference>
<dbReference type="RefSeq" id="WP_011672491.1">
    <property type="nucleotide sequence ID" value="NC_008513.1"/>
</dbReference>
<dbReference type="SMR" id="Q057X7"/>
<dbReference type="STRING" id="372461.BCc_095"/>
<dbReference type="KEGG" id="bcc:BCc_095"/>
<dbReference type="eggNOG" id="COG0484">
    <property type="taxonomic scope" value="Bacteria"/>
</dbReference>
<dbReference type="HOGENOM" id="CLU_017633_0_7_6"/>
<dbReference type="OrthoDB" id="9779889at2"/>
<dbReference type="Proteomes" id="UP000000669">
    <property type="component" value="Chromosome"/>
</dbReference>
<dbReference type="GO" id="GO:0005737">
    <property type="term" value="C:cytoplasm"/>
    <property type="evidence" value="ECO:0007669"/>
    <property type="project" value="UniProtKB-SubCell"/>
</dbReference>
<dbReference type="GO" id="GO:0005524">
    <property type="term" value="F:ATP binding"/>
    <property type="evidence" value="ECO:0007669"/>
    <property type="project" value="InterPro"/>
</dbReference>
<dbReference type="GO" id="GO:0031072">
    <property type="term" value="F:heat shock protein binding"/>
    <property type="evidence" value="ECO:0007669"/>
    <property type="project" value="InterPro"/>
</dbReference>
<dbReference type="GO" id="GO:0051082">
    <property type="term" value="F:unfolded protein binding"/>
    <property type="evidence" value="ECO:0007669"/>
    <property type="project" value="UniProtKB-UniRule"/>
</dbReference>
<dbReference type="GO" id="GO:0008270">
    <property type="term" value="F:zinc ion binding"/>
    <property type="evidence" value="ECO:0007669"/>
    <property type="project" value="UniProtKB-UniRule"/>
</dbReference>
<dbReference type="GO" id="GO:0051085">
    <property type="term" value="P:chaperone cofactor-dependent protein refolding"/>
    <property type="evidence" value="ECO:0007669"/>
    <property type="project" value="TreeGrafter"/>
</dbReference>
<dbReference type="GO" id="GO:0006260">
    <property type="term" value="P:DNA replication"/>
    <property type="evidence" value="ECO:0007669"/>
    <property type="project" value="UniProtKB-KW"/>
</dbReference>
<dbReference type="GO" id="GO:0042026">
    <property type="term" value="P:protein refolding"/>
    <property type="evidence" value="ECO:0007669"/>
    <property type="project" value="TreeGrafter"/>
</dbReference>
<dbReference type="GO" id="GO:0009408">
    <property type="term" value="P:response to heat"/>
    <property type="evidence" value="ECO:0007669"/>
    <property type="project" value="InterPro"/>
</dbReference>
<dbReference type="CDD" id="cd06257">
    <property type="entry name" value="DnaJ"/>
    <property type="match status" value="1"/>
</dbReference>
<dbReference type="CDD" id="cd10747">
    <property type="entry name" value="DnaJ_C"/>
    <property type="match status" value="1"/>
</dbReference>
<dbReference type="CDD" id="cd10719">
    <property type="entry name" value="DnaJ_zf"/>
    <property type="match status" value="1"/>
</dbReference>
<dbReference type="FunFam" id="1.10.287.110:FF:000034">
    <property type="entry name" value="Chaperone protein DnaJ"/>
    <property type="match status" value="1"/>
</dbReference>
<dbReference type="FunFam" id="2.10.230.10:FF:000002">
    <property type="entry name" value="Molecular chaperone DnaJ"/>
    <property type="match status" value="1"/>
</dbReference>
<dbReference type="FunFam" id="2.60.260.20:FF:000004">
    <property type="entry name" value="Molecular chaperone DnaJ"/>
    <property type="match status" value="1"/>
</dbReference>
<dbReference type="Gene3D" id="1.10.287.110">
    <property type="entry name" value="DnaJ domain"/>
    <property type="match status" value="1"/>
</dbReference>
<dbReference type="Gene3D" id="2.10.230.10">
    <property type="entry name" value="Heat shock protein DnaJ, cysteine-rich domain"/>
    <property type="match status" value="1"/>
</dbReference>
<dbReference type="Gene3D" id="2.60.260.20">
    <property type="entry name" value="Urease metallochaperone UreE, N-terminal domain"/>
    <property type="match status" value="2"/>
</dbReference>
<dbReference type="HAMAP" id="MF_01152">
    <property type="entry name" value="DnaJ"/>
    <property type="match status" value="1"/>
</dbReference>
<dbReference type="InterPro" id="IPR012724">
    <property type="entry name" value="DnaJ"/>
</dbReference>
<dbReference type="InterPro" id="IPR002939">
    <property type="entry name" value="DnaJ_C"/>
</dbReference>
<dbReference type="InterPro" id="IPR001623">
    <property type="entry name" value="DnaJ_domain"/>
</dbReference>
<dbReference type="InterPro" id="IPR018253">
    <property type="entry name" value="DnaJ_domain_CS"/>
</dbReference>
<dbReference type="InterPro" id="IPR008971">
    <property type="entry name" value="HSP40/DnaJ_pept-bd"/>
</dbReference>
<dbReference type="InterPro" id="IPR001305">
    <property type="entry name" value="HSP_DnaJ_Cys-rich_dom"/>
</dbReference>
<dbReference type="InterPro" id="IPR036410">
    <property type="entry name" value="HSP_DnaJ_Cys-rich_dom_sf"/>
</dbReference>
<dbReference type="InterPro" id="IPR036869">
    <property type="entry name" value="J_dom_sf"/>
</dbReference>
<dbReference type="NCBIfam" id="TIGR02349">
    <property type="entry name" value="DnaJ_bact"/>
    <property type="match status" value="1"/>
</dbReference>
<dbReference type="NCBIfam" id="NF008035">
    <property type="entry name" value="PRK10767.1"/>
    <property type="match status" value="1"/>
</dbReference>
<dbReference type="PANTHER" id="PTHR43096:SF48">
    <property type="entry name" value="CHAPERONE PROTEIN DNAJ"/>
    <property type="match status" value="1"/>
</dbReference>
<dbReference type="PANTHER" id="PTHR43096">
    <property type="entry name" value="DNAJ HOMOLOG 1, MITOCHONDRIAL-RELATED"/>
    <property type="match status" value="1"/>
</dbReference>
<dbReference type="Pfam" id="PF00226">
    <property type="entry name" value="DnaJ"/>
    <property type="match status" value="1"/>
</dbReference>
<dbReference type="Pfam" id="PF01556">
    <property type="entry name" value="DnaJ_C"/>
    <property type="match status" value="1"/>
</dbReference>
<dbReference type="Pfam" id="PF00684">
    <property type="entry name" value="DnaJ_CXXCXGXG"/>
    <property type="match status" value="1"/>
</dbReference>
<dbReference type="PRINTS" id="PR00625">
    <property type="entry name" value="JDOMAIN"/>
</dbReference>
<dbReference type="SMART" id="SM00271">
    <property type="entry name" value="DnaJ"/>
    <property type="match status" value="1"/>
</dbReference>
<dbReference type="SUPFAM" id="SSF46565">
    <property type="entry name" value="Chaperone J-domain"/>
    <property type="match status" value="1"/>
</dbReference>
<dbReference type="SUPFAM" id="SSF57938">
    <property type="entry name" value="DnaJ/Hsp40 cysteine-rich domain"/>
    <property type="match status" value="1"/>
</dbReference>
<dbReference type="SUPFAM" id="SSF49493">
    <property type="entry name" value="HSP40/DnaJ peptide-binding domain"/>
    <property type="match status" value="2"/>
</dbReference>
<dbReference type="PROSITE" id="PS00636">
    <property type="entry name" value="DNAJ_1"/>
    <property type="match status" value="1"/>
</dbReference>
<dbReference type="PROSITE" id="PS50076">
    <property type="entry name" value="DNAJ_2"/>
    <property type="match status" value="1"/>
</dbReference>
<dbReference type="PROSITE" id="PS51188">
    <property type="entry name" value="ZF_CR"/>
    <property type="match status" value="1"/>
</dbReference>
<organism>
    <name type="scientific">Buchnera aphidicola subsp. Cinara cedri (strain Cc)</name>
    <dbReference type="NCBI Taxonomy" id="372461"/>
    <lineage>
        <taxon>Bacteria</taxon>
        <taxon>Pseudomonadati</taxon>
        <taxon>Pseudomonadota</taxon>
        <taxon>Gammaproteobacteria</taxon>
        <taxon>Enterobacterales</taxon>
        <taxon>Erwiniaceae</taxon>
        <taxon>Buchnera</taxon>
    </lineage>
</organism>
<reference key="1">
    <citation type="journal article" date="2006" name="Science">
        <title>A small microbial genome: the end of a long symbiotic relationship?</title>
        <authorList>
            <person name="Perez-Brocal V."/>
            <person name="Gil R."/>
            <person name="Ramos S."/>
            <person name="Lamelas A."/>
            <person name="Postigo M."/>
            <person name="Michelena J.M."/>
            <person name="Silva F.J."/>
            <person name="Moya A."/>
            <person name="Latorre A."/>
        </authorList>
    </citation>
    <scope>NUCLEOTIDE SEQUENCE [LARGE SCALE GENOMIC DNA]</scope>
    <source>
        <strain>Cc</strain>
    </source>
</reference>